<reference key="1">
    <citation type="journal article" date="2009" name="Appl. Environ. Microbiol.">
        <title>Metabolic versatility and indigenous origin of the archaeon Thermococcus sibiricus, isolated from a siberian oil reservoir, as revealed by genome analysis.</title>
        <authorList>
            <person name="Mardanov A.V."/>
            <person name="Ravin N.V."/>
            <person name="Svetlitchnyi V.A."/>
            <person name="Beletsky A.V."/>
            <person name="Miroshnichenko M.L."/>
            <person name="Bonch-Osmolovskaya E.A."/>
            <person name="Skryabin K.G."/>
        </authorList>
    </citation>
    <scope>NUCLEOTIDE SEQUENCE [LARGE SCALE GENOMIC DNA]</scope>
    <source>
        <strain>DSM 12597 / MM 739</strain>
    </source>
</reference>
<proteinExistence type="inferred from homology"/>
<evidence type="ECO:0000255" key="1">
    <source>
        <dbReference type="HAMAP-Rule" id="MF_00351"/>
    </source>
</evidence>
<protein>
    <recommendedName>
        <fullName evidence="1">Fibrillarin-like rRNA/tRNA 2'-O-methyltransferase</fullName>
        <ecNumber evidence="1">2.1.1.-</ecNumber>
    </recommendedName>
</protein>
<keyword id="KW-0489">Methyltransferase</keyword>
<keyword id="KW-1185">Reference proteome</keyword>
<keyword id="KW-0694">RNA-binding</keyword>
<keyword id="KW-0698">rRNA processing</keyword>
<keyword id="KW-0808">Transferase</keyword>
<keyword id="KW-0819">tRNA processing</keyword>
<organism>
    <name type="scientific">Thermococcus sibiricus (strain DSM 12597 / MM 739)</name>
    <dbReference type="NCBI Taxonomy" id="604354"/>
    <lineage>
        <taxon>Archaea</taxon>
        <taxon>Methanobacteriati</taxon>
        <taxon>Methanobacteriota</taxon>
        <taxon>Thermococci</taxon>
        <taxon>Thermococcales</taxon>
        <taxon>Thermococcaceae</taxon>
        <taxon>Thermococcus</taxon>
    </lineage>
</organism>
<dbReference type="EC" id="2.1.1.-" evidence="1"/>
<dbReference type="EMBL" id="CP001463">
    <property type="protein sequence ID" value="ACS89858.1"/>
    <property type="molecule type" value="Genomic_DNA"/>
</dbReference>
<dbReference type="RefSeq" id="WP_015849078.1">
    <property type="nucleotide sequence ID" value="NC_012883.1"/>
</dbReference>
<dbReference type="SMR" id="C6A2L3"/>
<dbReference type="STRING" id="604354.TSIB_0797"/>
<dbReference type="GeneID" id="8095787"/>
<dbReference type="KEGG" id="tsi:TSIB_0797"/>
<dbReference type="eggNOG" id="arCOG00078">
    <property type="taxonomic scope" value="Archaea"/>
</dbReference>
<dbReference type="HOGENOM" id="CLU_059055_2_0_2"/>
<dbReference type="OrthoDB" id="6244at2157"/>
<dbReference type="Proteomes" id="UP000009079">
    <property type="component" value="Chromosome"/>
</dbReference>
<dbReference type="GO" id="GO:1990259">
    <property type="term" value="F:histone H2AQ104 methyltransferase activity"/>
    <property type="evidence" value="ECO:0007669"/>
    <property type="project" value="TreeGrafter"/>
</dbReference>
<dbReference type="GO" id="GO:0003723">
    <property type="term" value="F:RNA binding"/>
    <property type="evidence" value="ECO:0007669"/>
    <property type="project" value="UniProtKB-UniRule"/>
</dbReference>
<dbReference type="GO" id="GO:0008649">
    <property type="term" value="F:rRNA methyltransferase activity"/>
    <property type="evidence" value="ECO:0007669"/>
    <property type="project" value="TreeGrafter"/>
</dbReference>
<dbReference type="GO" id="GO:0000494">
    <property type="term" value="P:box C/D sno(s)RNA 3'-end processing"/>
    <property type="evidence" value="ECO:0007669"/>
    <property type="project" value="TreeGrafter"/>
</dbReference>
<dbReference type="GO" id="GO:0008033">
    <property type="term" value="P:tRNA processing"/>
    <property type="evidence" value="ECO:0007669"/>
    <property type="project" value="UniProtKB-UniRule"/>
</dbReference>
<dbReference type="FunFam" id="3.30.200.20:FF:000613">
    <property type="entry name" value="Fibrillarin-like rRNA/tRNA 2'-O-methyltransferase"/>
    <property type="match status" value="1"/>
</dbReference>
<dbReference type="Gene3D" id="3.30.200.20">
    <property type="entry name" value="Phosphorylase Kinase, domain 1"/>
    <property type="match status" value="1"/>
</dbReference>
<dbReference type="Gene3D" id="3.40.50.150">
    <property type="entry name" value="Vaccinia Virus protein VP39"/>
    <property type="match status" value="1"/>
</dbReference>
<dbReference type="HAMAP" id="MF_00351">
    <property type="entry name" value="RNA_methyltransf_FlpA"/>
    <property type="match status" value="1"/>
</dbReference>
<dbReference type="InterPro" id="IPR000692">
    <property type="entry name" value="Fibrillarin"/>
</dbReference>
<dbReference type="InterPro" id="IPR020813">
    <property type="entry name" value="Fibrillarin_CS"/>
</dbReference>
<dbReference type="InterPro" id="IPR029063">
    <property type="entry name" value="SAM-dependent_MTases_sf"/>
</dbReference>
<dbReference type="NCBIfam" id="NF003276">
    <property type="entry name" value="PRK04266.1-2"/>
    <property type="match status" value="1"/>
</dbReference>
<dbReference type="NCBIfam" id="NF003277">
    <property type="entry name" value="PRK04266.1-3"/>
    <property type="match status" value="1"/>
</dbReference>
<dbReference type="PANTHER" id="PTHR10335:SF17">
    <property type="entry name" value="FIBRILLARIN"/>
    <property type="match status" value="1"/>
</dbReference>
<dbReference type="PANTHER" id="PTHR10335">
    <property type="entry name" value="RRNA 2-O-METHYLTRANSFERASE FIBRILLARIN"/>
    <property type="match status" value="1"/>
</dbReference>
<dbReference type="Pfam" id="PF01269">
    <property type="entry name" value="Fibrillarin"/>
    <property type="match status" value="1"/>
</dbReference>
<dbReference type="PIRSF" id="PIRSF006540">
    <property type="entry name" value="Nop17p"/>
    <property type="match status" value="1"/>
</dbReference>
<dbReference type="PRINTS" id="PR00052">
    <property type="entry name" value="FIBRILLARIN"/>
</dbReference>
<dbReference type="SMART" id="SM01206">
    <property type="entry name" value="Fibrillarin"/>
    <property type="match status" value="1"/>
</dbReference>
<dbReference type="SUPFAM" id="SSF53335">
    <property type="entry name" value="S-adenosyl-L-methionine-dependent methyltransferases"/>
    <property type="match status" value="1"/>
</dbReference>
<dbReference type="PROSITE" id="PS00566">
    <property type="entry name" value="FIBRILLARIN"/>
    <property type="match status" value="1"/>
</dbReference>
<accession>C6A2L3</accession>
<sequence length="226" mass="25584">MNVKKHKFPGVYTVIEDDGSERIATKNLVPGQKVYGERIVKWKGEEYRIWNPNRSKLAAAILNDLKNFPIKPGTTVLYLGIASGTTASHVSDIIGWEGKIFGIEFSPRVLRELVPLVEERRNIVPILGDATKPEEYRALVTKVDVIFEDVAQPTQAKILIDNAKAYLKSGGYGMISIKSRSIDVTKEPEEVFREVEKELSEYFEVVERISLEPYEKDHALIVVRKP</sequence>
<comment type="function">
    <text evidence="1">Involved in pre-rRNA and tRNA processing. Utilizes the methyl donor S-adenosyl-L-methionine to catalyze the site-specific 2'-hydroxyl methylation of ribose moieties in rRNA and tRNA. Site specificity is provided by a guide RNA that base pairs with the substrate. Methylation occurs at a characteristic distance from the sequence involved in base pairing with the guide RNA.</text>
</comment>
<comment type="subunit">
    <text evidence="1">Interacts with nop5. Component of box C/D small ribonucleoprotein (sRNP) particles that contain rpl7ae, FlpA and nop5, plus a guide RNA.</text>
</comment>
<comment type="similarity">
    <text evidence="1">Belongs to the methyltransferase superfamily. Fibrillarin family.</text>
</comment>
<feature type="chain" id="PRO_1000205348" description="Fibrillarin-like rRNA/tRNA 2'-O-methyltransferase">
    <location>
        <begin position="1"/>
        <end position="226"/>
    </location>
</feature>
<feature type="binding site" evidence="1">
    <location>
        <begin position="85"/>
        <end position="86"/>
    </location>
    <ligand>
        <name>S-adenosyl-L-methionine</name>
        <dbReference type="ChEBI" id="CHEBI:59789"/>
    </ligand>
</feature>
<feature type="binding site" evidence="1">
    <location>
        <begin position="104"/>
        <end position="105"/>
    </location>
    <ligand>
        <name>S-adenosyl-L-methionine</name>
        <dbReference type="ChEBI" id="CHEBI:59789"/>
    </ligand>
</feature>
<feature type="binding site" evidence="1">
    <location>
        <begin position="129"/>
        <end position="130"/>
    </location>
    <ligand>
        <name>S-adenosyl-L-methionine</name>
        <dbReference type="ChEBI" id="CHEBI:59789"/>
    </ligand>
</feature>
<feature type="binding site" evidence="1">
    <location>
        <begin position="149"/>
        <end position="152"/>
    </location>
    <ligand>
        <name>S-adenosyl-L-methionine</name>
        <dbReference type="ChEBI" id="CHEBI:59789"/>
    </ligand>
</feature>
<gene>
    <name evidence="1" type="primary">flpA</name>
    <name type="ordered locus">TSIB_0797</name>
</gene>
<name>FLPA_THESM</name>